<protein>
    <recommendedName>
        <fullName evidence="1">Small ribosomal subunit protein uS13</fullName>
    </recommendedName>
    <alternativeName>
        <fullName evidence="3">30S ribosomal protein S13</fullName>
    </alternativeName>
</protein>
<reference key="1">
    <citation type="journal article" date="2009" name="Appl. Environ. Microbiol.">
        <title>Genomic analysis of 'Elusimicrobium minutum,' the first cultivated representative of the phylum 'Elusimicrobia' (formerly termite group 1).</title>
        <authorList>
            <person name="Herlemann D.P.R."/>
            <person name="Geissinger O."/>
            <person name="Ikeda-Ohtsubo W."/>
            <person name="Kunin V."/>
            <person name="Sun H."/>
            <person name="Lapidus A."/>
            <person name="Hugenholtz P."/>
            <person name="Brune A."/>
        </authorList>
    </citation>
    <scope>NUCLEOTIDE SEQUENCE [LARGE SCALE GENOMIC DNA]</scope>
    <source>
        <strain>Pei191</strain>
    </source>
</reference>
<gene>
    <name evidence="1" type="primary">rpsM</name>
    <name type="ordered locus">Emin_1393</name>
</gene>
<feature type="chain" id="PRO_1000141260" description="Small ribosomal subunit protein uS13">
    <location>
        <begin position="1"/>
        <end position="124"/>
    </location>
</feature>
<feature type="region of interest" description="Disordered" evidence="2">
    <location>
        <begin position="87"/>
        <end position="124"/>
    </location>
</feature>
<feature type="compositionally biased region" description="Basic residues" evidence="2">
    <location>
        <begin position="91"/>
        <end position="124"/>
    </location>
</feature>
<proteinExistence type="inferred from homology"/>
<comment type="function">
    <text evidence="1">Located at the top of the head of the 30S subunit, it contacts several helices of the 16S rRNA. In the 70S ribosome it contacts the 23S rRNA (bridge B1a) and protein L5 of the 50S subunit (bridge B1b), connecting the 2 subunits; these bridges are implicated in subunit movement. Contacts the tRNAs in the A and P-sites.</text>
</comment>
<comment type="subunit">
    <text evidence="1">Part of the 30S ribosomal subunit. Forms a loose heterodimer with protein S19. Forms two bridges to the 50S subunit in the 70S ribosome.</text>
</comment>
<comment type="similarity">
    <text evidence="1">Belongs to the universal ribosomal protein uS13 family.</text>
</comment>
<dbReference type="EMBL" id="CP001055">
    <property type="protein sequence ID" value="ACC98942.1"/>
    <property type="molecule type" value="Genomic_DNA"/>
</dbReference>
<dbReference type="RefSeq" id="WP_012415557.1">
    <property type="nucleotide sequence ID" value="NC_010644.1"/>
</dbReference>
<dbReference type="SMR" id="B2KEJ6"/>
<dbReference type="STRING" id="445932.Emin_1393"/>
<dbReference type="KEGG" id="emi:Emin_1393"/>
<dbReference type="HOGENOM" id="CLU_103849_1_2_0"/>
<dbReference type="OrthoDB" id="9803610at2"/>
<dbReference type="Proteomes" id="UP000001029">
    <property type="component" value="Chromosome"/>
</dbReference>
<dbReference type="GO" id="GO:0005829">
    <property type="term" value="C:cytosol"/>
    <property type="evidence" value="ECO:0007669"/>
    <property type="project" value="TreeGrafter"/>
</dbReference>
<dbReference type="GO" id="GO:0015935">
    <property type="term" value="C:small ribosomal subunit"/>
    <property type="evidence" value="ECO:0007669"/>
    <property type="project" value="TreeGrafter"/>
</dbReference>
<dbReference type="GO" id="GO:0019843">
    <property type="term" value="F:rRNA binding"/>
    <property type="evidence" value="ECO:0007669"/>
    <property type="project" value="UniProtKB-UniRule"/>
</dbReference>
<dbReference type="GO" id="GO:0003735">
    <property type="term" value="F:structural constituent of ribosome"/>
    <property type="evidence" value="ECO:0007669"/>
    <property type="project" value="InterPro"/>
</dbReference>
<dbReference type="GO" id="GO:0000049">
    <property type="term" value="F:tRNA binding"/>
    <property type="evidence" value="ECO:0007669"/>
    <property type="project" value="UniProtKB-UniRule"/>
</dbReference>
<dbReference type="GO" id="GO:0006412">
    <property type="term" value="P:translation"/>
    <property type="evidence" value="ECO:0007669"/>
    <property type="project" value="UniProtKB-UniRule"/>
</dbReference>
<dbReference type="FunFam" id="1.10.8.50:FF:000001">
    <property type="entry name" value="30S ribosomal protein S13"/>
    <property type="match status" value="1"/>
</dbReference>
<dbReference type="Gene3D" id="1.10.8.50">
    <property type="match status" value="1"/>
</dbReference>
<dbReference type="Gene3D" id="4.10.910.10">
    <property type="entry name" value="30s ribosomal protein s13, domain 2"/>
    <property type="match status" value="1"/>
</dbReference>
<dbReference type="HAMAP" id="MF_01315">
    <property type="entry name" value="Ribosomal_uS13"/>
    <property type="match status" value="1"/>
</dbReference>
<dbReference type="InterPro" id="IPR027437">
    <property type="entry name" value="Rbsml_uS13_C"/>
</dbReference>
<dbReference type="InterPro" id="IPR001892">
    <property type="entry name" value="Ribosomal_uS13"/>
</dbReference>
<dbReference type="InterPro" id="IPR010979">
    <property type="entry name" value="Ribosomal_uS13-like_H2TH"/>
</dbReference>
<dbReference type="InterPro" id="IPR019980">
    <property type="entry name" value="Ribosomal_uS13_bac-type"/>
</dbReference>
<dbReference type="NCBIfam" id="TIGR03631">
    <property type="entry name" value="uS13_bact"/>
    <property type="match status" value="1"/>
</dbReference>
<dbReference type="PANTHER" id="PTHR10871">
    <property type="entry name" value="30S RIBOSOMAL PROTEIN S13/40S RIBOSOMAL PROTEIN S18"/>
    <property type="match status" value="1"/>
</dbReference>
<dbReference type="PANTHER" id="PTHR10871:SF1">
    <property type="entry name" value="SMALL RIBOSOMAL SUBUNIT PROTEIN US13M"/>
    <property type="match status" value="1"/>
</dbReference>
<dbReference type="Pfam" id="PF00416">
    <property type="entry name" value="Ribosomal_S13"/>
    <property type="match status" value="1"/>
</dbReference>
<dbReference type="PIRSF" id="PIRSF002134">
    <property type="entry name" value="Ribosomal_S13"/>
    <property type="match status" value="1"/>
</dbReference>
<dbReference type="SUPFAM" id="SSF46946">
    <property type="entry name" value="S13-like H2TH domain"/>
    <property type="match status" value="1"/>
</dbReference>
<dbReference type="PROSITE" id="PS50159">
    <property type="entry name" value="RIBOSOMAL_S13_2"/>
    <property type="match status" value="1"/>
</dbReference>
<sequence>MARVAGIDLPKNKRIDVALEYIYGIGKRNAKDVIAKANGQIDPTTRVKDLTEAQANLLNTILQKEYKVEGELRREISGNIQRYVDTGSYRGNRHRKRLPVRGQRTKTNSRTRKGKRRTVGSKTK</sequence>
<organism>
    <name type="scientific">Elusimicrobium minutum (strain Pei191)</name>
    <dbReference type="NCBI Taxonomy" id="445932"/>
    <lineage>
        <taxon>Bacteria</taxon>
        <taxon>Pseudomonadati</taxon>
        <taxon>Elusimicrobiota</taxon>
        <taxon>Elusimicrobia</taxon>
        <taxon>Elusimicrobiales</taxon>
        <taxon>Elusimicrobiaceae</taxon>
        <taxon>Elusimicrobium</taxon>
    </lineage>
</organism>
<name>RS13_ELUMP</name>
<keyword id="KW-1185">Reference proteome</keyword>
<keyword id="KW-0687">Ribonucleoprotein</keyword>
<keyword id="KW-0689">Ribosomal protein</keyword>
<keyword id="KW-0694">RNA-binding</keyword>
<keyword id="KW-0699">rRNA-binding</keyword>
<keyword id="KW-0820">tRNA-binding</keyword>
<evidence type="ECO:0000255" key="1">
    <source>
        <dbReference type="HAMAP-Rule" id="MF_01315"/>
    </source>
</evidence>
<evidence type="ECO:0000256" key="2">
    <source>
        <dbReference type="SAM" id="MobiDB-lite"/>
    </source>
</evidence>
<evidence type="ECO:0000305" key="3"/>
<accession>B2KEJ6</accession>